<gene>
    <name evidence="5" type="primary">VDAC2</name>
</gene>
<keyword id="KW-0007">Acetylation</keyword>
<keyword id="KW-0067">ATP-binding</keyword>
<keyword id="KW-0903">Direct protein sequencing</keyword>
<keyword id="KW-0406">Ion transport</keyword>
<keyword id="KW-1017">Isopeptide bond</keyword>
<keyword id="KW-0445">Lipid transport</keyword>
<keyword id="KW-0446">Lipid-binding</keyword>
<keyword id="KW-0472">Membrane</keyword>
<keyword id="KW-0496">Mitochondrion</keyword>
<keyword id="KW-1000">Mitochondrion outer membrane</keyword>
<keyword id="KW-0520">NAD</keyword>
<keyword id="KW-0547">Nucleotide-binding</keyword>
<keyword id="KW-0597">Phosphoprotein</keyword>
<keyword id="KW-0626">Porin</keyword>
<keyword id="KW-1185">Reference proteome</keyword>
<keyword id="KW-0812">Transmembrane</keyword>
<keyword id="KW-1134">Transmembrane beta strand</keyword>
<keyword id="KW-0813">Transport</keyword>
<keyword id="KW-0832">Ubl conjugation</keyword>
<proteinExistence type="evidence at protein level"/>
<evidence type="ECO:0000250" key="1">
    <source>
        <dbReference type="UniProtKB" id="P21796"/>
    </source>
</evidence>
<evidence type="ECO:0000250" key="2">
    <source>
        <dbReference type="UniProtKB" id="P45880"/>
    </source>
</evidence>
<evidence type="ECO:0000250" key="3">
    <source>
        <dbReference type="UniProtKB" id="Q60930"/>
    </source>
</evidence>
<evidence type="ECO:0000250" key="4">
    <source>
        <dbReference type="UniProtKB" id="Q60932"/>
    </source>
</evidence>
<evidence type="ECO:0000250" key="5">
    <source>
        <dbReference type="UniProtKB" id="Q9Y5I6"/>
    </source>
</evidence>
<evidence type="ECO:0000250" key="6">
    <source>
        <dbReference type="UniProtKB" id="Q9Z2L0"/>
    </source>
</evidence>
<evidence type="ECO:0000303" key="7">
    <source>
    </source>
</evidence>
<evidence type="ECO:0000305" key="8"/>
<evidence type="ECO:0000312" key="9">
    <source>
        <dbReference type="Proteomes" id="UP000001645"/>
    </source>
</evidence>
<protein>
    <recommendedName>
        <fullName evidence="5">Non-selective voltage-gated ion channel VDAC2</fullName>
        <shortName>VDAC-2</shortName>
    </recommendedName>
    <alternativeName>
        <fullName>Outer mitochondrial membrane protein porin 2</fullName>
    </alternativeName>
</protein>
<name>VDAC2_MELGA</name>
<organism>
    <name type="scientific">Meleagris gallopavo</name>
    <name type="common">Wild turkey</name>
    <dbReference type="NCBI Taxonomy" id="9103"/>
    <lineage>
        <taxon>Eukaryota</taxon>
        <taxon>Metazoa</taxon>
        <taxon>Chordata</taxon>
        <taxon>Craniata</taxon>
        <taxon>Vertebrata</taxon>
        <taxon>Euteleostomi</taxon>
        <taxon>Archelosauria</taxon>
        <taxon>Archosauria</taxon>
        <taxon>Dinosauria</taxon>
        <taxon>Saurischia</taxon>
        <taxon>Theropoda</taxon>
        <taxon>Coelurosauria</taxon>
        <taxon>Aves</taxon>
        <taxon>Neognathae</taxon>
        <taxon>Galloanserae</taxon>
        <taxon>Galliformes</taxon>
        <taxon>Phasianidae</taxon>
        <taxon>Meleagridinae</taxon>
        <taxon>Meleagris</taxon>
    </lineage>
</organism>
<reference evidence="9" key="1">
    <citation type="journal article" date="2010" name="PLoS Biol.">
        <title>Multi-platform next-generation sequencing of the domestic turkey (Meleagris gallopavo): genome assembly and analysis.</title>
        <authorList>
            <person name="Dalloul R.A."/>
            <person name="Long J.A."/>
            <person name="Zimin A.V."/>
            <person name="Aslam L."/>
            <person name="Beal K."/>
            <person name="Blomberg L.A."/>
            <person name="Bouffard P."/>
            <person name="Burt D.W."/>
            <person name="Crasta O."/>
            <person name="Crooijmans R.P."/>
            <person name="Cooper K."/>
            <person name="Coulombe R.A."/>
            <person name="De S."/>
            <person name="Delany M.E."/>
            <person name="Dodgson J.B."/>
            <person name="Dong J.J."/>
            <person name="Evans C."/>
            <person name="Frederickson K.M."/>
            <person name="Flicek P."/>
            <person name="Florea L."/>
            <person name="Folkerts O."/>
            <person name="Groenen M.A."/>
            <person name="Harkins T.T."/>
            <person name="Herrero J."/>
            <person name="Hoffmann S."/>
            <person name="Megens H.J."/>
            <person name="Jiang A."/>
            <person name="de Jong P."/>
            <person name="Kaiser P."/>
            <person name="Kim H."/>
            <person name="Kim K.W."/>
            <person name="Kim S."/>
            <person name="Langenberger D."/>
            <person name="Lee M.K."/>
            <person name="Lee T."/>
            <person name="Mane S."/>
            <person name="Marcais G."/>
            <person name="Marz M."/>
            <person name="McElroy A.P."/>
            <person name="Modise T."/>
            <person name="Nefedov M."/>
            <person name="Notredame C."/>
            <person name="Paton I.R."/>
            <person name="Payne W.S."/>
            <person name="Pertea G."/>
            <person name="Prickett D."/>
            <person name="Puiu D."/>
            <person name="Qioa D."/>
            <person name="Raineri E."/>
            <person name="Ruffier M."/>
            <person name="Salzberg S.L."/>
            <person name="Schatz M.C."/>
            <person name="Scheuring C."/>
            <person name="Schmidt C.J."/>
            <person name="Schroeder S."/>
            <person name="Searle S.M."/>
            <person name="Smith E.J."/>
            <person name="Smith J."/>
            <person name="Sonstegard T.S."/>
            <person name="Stadler P.F."/>
            <person name="Tafer H."/>
            <person name="Tu Z.J."/>
            <person name="Van Tassell C.P."/>
            <person name="Vilella A.J."/>
            <person name="Williams K.P."/>
            <person name="Yorke J.A."/>
            <person name="Zhang L."/>
            <person name="Zhang H.B."/>
            <person name="Zhang X."/>
            <person name="Zhang Y."/>
            <person name="Reed K.M."/>
        </authorList>
    </citation>
    <scope>NUCLEOTIDE SEQUENCE [LARGE SCALE GENOMIC DNA]</scope>
</reference>
<reference key="2">
    <citation type="journal article" date="1999" name="Anal. Biochem.">
        <title>Purification procedure and monoclonal antibodies: two instruments for research on vertebrate porins.</title>
        <authorList>
            <person name="Reymann S."/>
            <person name="Kiafard Z."/>
            <person name="Rohm B."/>
            <person name="Strutz N."/>
            <person name="Hesse D."/>
            <person name="Kratzin H.D."/>
            <person name="Zimmermann B."/>
            <person name="Thinnes F.P."/>
            <person name="Hilschmann N."/>
        </authorList>
    </citation>
    <scope>PROTEIN SEQUENCE OF 20-27; 34-60; 74-92; 96-108; 166-173; 218-223; 256-265 AND 274-282</scope>
    <source>
        <tissue evidence="7">Skeletal muscle</tissue>
    </source>
</reference>
<reference key="3">
    <citation type="submission" date="1999-09" db="UniProtKB">
        <authorList>
            <person name="Hesse D."/>
            <person name="Strutz N."/>
            <person name="Kratzin H.D."/>
            <person name="Thinnes F.P."/>
            <person name="Hilschmann N."/>
        </authorList>
    </citation>
    <scope>PARTIAL PROTEIN SEQUENCE</scope>
    <source>
        <tissue>Skeletal muscle</tissue>
    </source>
</reference>
<dbReference type="RefSeq" id="XP_010712670.1">
    <property type="nucleotide sequence ID" value="XM_010714368.3"/>
</dbReference>
<dbReference type="SMR" id="P82013"/>
<dbReference type="Ensembl" id="ENSMGAT00000019175.2">
    <property type="protein sequence ID" value="ENSMGAP00000019632.2"/>
    <property type="gene ID" value="ENSMGAG00000006031.3"/>
</dbReference>
<dbReference type="GeneID" id="100540440"/>
<dbReference type="KEGG" id="mgp:100540440"/>
<dbReference type="CTD" id="7417"/>
<dbReference type="GeneTree" id="ENSGT00950000182869"/>
<dbReference type="InParanoid" id="P82013"/>
<dbReference type="OrthoDB" id="7827681at2759"/>
<dbReference type="Proteomes" id="UP000001645">
    <property type="component" value="Chromosome 8"/>
</dbReference>
<dbReference type="Bgee" id="ENSMGAG00000006031">
    <property type="expression patterns" value="Expressed in hindlimb stylopod and 17 other cell types or tissues"/>
</dbReference>
<dbReference type="GO" id="GO:0001669">
    <property type="term" value="C:acrosomal vesicle"/>
    <property type="evidence" value="ECO:0007669"/>
    <property type="project" value="Ensembl"/>
</dbReference>
<dbReference type="GO" id="GO:0042645">
    <property type="term" value="C:mitochondrial nucleoid"/>
    <property type="evidence" value="ECO:0007669"/>
    <property type="project" value="Ensembl"/>
</dbReference>
<dbReference type="GO" id="GO:0005741">
    <property type="term" value="C:mitochondrial outer membrane"/>
    <property type="evidence" value="ECO:0000250"/>
    <property type="project" value="UniProtKB"/>
</dbReference>
<dbReference type="GO" id="GO:0046930">
    <property type="term" value="C:pore complex"/>
    <property type="evidence" value="ECO:0007669"/>
    <property type="project" value="UniProtKB-KW"/>
</dbReference>
<dbReference type="GO" id="GO:0005524">
    <property type="term" value="F:ATP binding"/>
    <property type="evidence" value="ECO:0007669"/>
    <property type="project" value="UniProtKB-KW"/>
</dbReference>
<dbReference type="GO" id="GO:0097001">
    <property type="term" value="F:ceramide binding"/>
    <property type="evidence" value="ECO:0007669"/>
    <property type="project" value="Ensembl"/>
</dbReference>
<dbReference type="GO" id="GO:0015485">
    <property type="term" value="F:cholesterol binding"/>
    <property type="evidence" value="ECO:0007669"/>
    <property type="project" value="Ensembl"/>
</dbReference>
<dbReference type="GO" id="GO:0008142">
    <property type="term" value="F:oxysterol binding"/>
    <property type="evidence" value="ECO:0000250"/>
    <property type="project" value="UniProtKB"/>
</dbReference>
<dbReference type="GO" id="GO:0031210">
    <property type="term" value="F:phosphatidylcholine binding"/>
    <property type="evidence" value="ECO:0007669"/>
    <property type="project" value="Ensembl"/>
</dbReference>
<dbReference type="GO" id="GO:0017128">
    <property type="term" value="F:phospholipid scramblase activity"/>
    <property type="evidence" value="ECO:0007669"/>
    <property type="project" value="Ensembl"/>
</dbReference>
<dbReference type="GO" id="GO:0015288">
    <property type="term" value="F:porin activity"/>
    <property type="evidence" value="ECO:0007669"/>
    <property type="project" value="UniProtKB-KW"/>
</dbReference>
<dbReference type="GO" id="GO:0008308">
    <property type="term" value="F:voltage-gated monoatomic anion channel activity"/>
    <property type="evidence" value="ECO:0007669"/>
    <property type="project" value="Ensembl"/>
</dbReference>
<dbReference type="GO" id="GO:0005244">
    <property type="term" value="F:voltage-gated monoatomic ion channel activity"/>
    <property type="evidence" value="ECO:0000250"/>
    <property type="project" value="UniProtKB"/>
</dbReference>
<dbReference type="GO" id="GO:0007339">
    <property type="term" value="P:binding of sperm to zona pellucida"/>
    <property type="evidence" value="ECO:0007669"/>
    <property type="project" value="Ensembl"/>
</dbReference>
<dbReference type="GO" id="GO:0097345">
    <property type="term" value="P:mitochondrial outer membrane permeabilization"/>
    <property type="evidence" value="ECO:0007669"/>
    <property type="project" value="Ensembl"/>
</dbReference>
<dbReference type="GO" id="GO:1990542">
    <property type="term" value="P:mitochondrial transmembrane transport"/>
    <property type="evidence" value="ECO:0007669"/>
    <property type="project" value="Ensembl"/>
</dbReference>
<dbReference type="GO" id="GO:0006820">
    <property type="term" value="P:monoatomic anion transport"/>
    <property type="evidence" value="ECO:0000250"/>
    <property type="project" value="UniProtKB"/>
</dbReference>
<dbReference type="CDD" id="cd07306">
    <property type="entry name" value="Porin3_VDAC"/>
    <property type="match status" value="1"/>
</dbReference>
<dbReference type="FunFam" id="2.40.160.10:FF:000001">
    <property type="entry name" value="Voltage-dependent anion-selective channel protein 2"/>
    <property type="match status" value="1"/>
</dbReference>
<dbReference type="Gene3D" id="2.40.160.10">
    <property type="entry name" value="Porin"/>
    <property type="match status" value="1"/>
</dbReference>
<dbReference type="InterPro" id="IPR023614">
    <property type="entry name" value="Porin_dom_sf"/>
</dbReference>
<dbReference type="InterPro" id="IPR001925">
    <property type="entry name" value="Porin_Euk"/>
</dbReference>
<dbReference type="InterPro" id="IPR027246">
    <property type="entry name" value="Porin_Euk/Tom40"/>
</dbReference>
<dbReference type="PANTHER" id="PTHR11743">
    <property type="entry name" value="VOLTAGE-DEPENDENT ANION-SELECTIVE CHANNEL"/>
    <property type="match status" value="1"/>
</dbReference>
<dbReference type="PANTHER" id="PTHR11743:SF12">
    <property type="entry name" value="VOLTAGE-DEPENDENT ANION-SELECTIVE CHANNEL PROTEIN 2"/>
    <property type="match status" value="1"/>
</dbReference>
<dbReference type="Pfam" id="PF01459">
    <property type="entry name" value="Porin_3"/>
    <property type="match status" value="1"/>
</dbReference>
<dbReference type="PRINTS" id="PR00185">
    <property type="entry name" value="EUKARYTPORIN"/>
</dbReference>
<dbReference type="PROSITE" id="PS00558">
    <property type="entry name" value="EUKARYOTIC_PORIN"/>
    <property type="match status" value="1"/>
</dbReference>
<feature type="chain" id="PRO_0000050510" description="Non-selective voltage-gated ion channel VDAC2">
    <location>
        <begin position="1"/>
        <end position="296"/>
    </location>
</feature>
<feature type="transmembrane region" description="Beta stranded" evidence="1">
    <location>
        <begin position="39"/>
        <end position="48"/>
    </location>
</feature>
<feature type="transmembrane region" description="Beta stranded" evidence="1">
    <location>
        <begin position="52"/>
        <end position="60"/>
    </location>
</feature>
<feature type="transmembrane region" description="Beta stranded" evidence="1">
    <location>
        <begin position="67"/>
        <end position="77"/>
    </location>
</feature>
<feature type="transmembrane region" description="Beta stranded" evidence="1">
    <location>
        <begin position="82"/>
        <end position="89"/>
    </location>
</feature>
<feature type="transmembrane region" description="Beta stranded" evidence="1">
    <location>
        <begin position="93"/>
        <end position="102"/>
    </location>
</feature>
<feature type="transmembrane region" description="Beta stranded" evidence="1">
    <location>
        <begin position="108"/>
        <end position="117"/>
    </location>
</feature>
<feature type="transmembrane region" description="Beta stranded" evidence="1">
    <location>
        <begin position="124"/>
        <end position="133"/>
    </location>
</feature>
<feature type="transmembrane region" description="Beta stranded" evidence="1">
    <location>
        <begin position="136"/>
        <end position="143"/>
    </location>
</feature>
<feature type="transmembrane region" description="Beta stranded" evidence="1">
    <location>
        <begin position="150"/>
        <end position="158"/>
    </location>
</feature>
<feature type="transmembrane region" description="Beta stranded" evidence="1">
    <location>
        <begin position="163"/>
        <end position="171"/>
    </location>
</feature>
<feature type="transmembrane region" description="Beta stranded" evidence="1">
    <location>
        <begin position="176"/>
        <end position="188"/>
    </location>
</feature>
<feature type="transmembrane region" description="Beta stranded" evidence="1">
    <location>
        <begin position="191"/>
        <end position="198"/>
    </location>
</feature>
<feature type="transmembrane region" description="Beta stranded" evidence="1">
    <location>
        <begin position="202"/>
        <end position="211"/>
    </location>
</feature>
<feature type="transmembrane region" description="Beta stranded" evidence="1">
    <location>
        <begin position="215"/>
        <end position="224"/>
    </location>
</feature>
<feature type="transmembrane region" description="Beta stranded" evidence="1">
    <location>
        <begin position="231"/>
        <end position="240"/>
    </location>
</feature>
<feature type="transmembrane region" description="Beta stranded" evidence="1">
    <location>
        <begin position="244"/>
        <end position="251"/>
    </location>
</feature>
<feature type="transmembrane region" description="Beta stranded" evidence="1">
    <location>
        <begin position="255"/>
        <end position="264"/>
    </location>
</feature>
<feature type="transmembrane region" description="Beta stranded" evidence="1">
    <location>
        <begin position="267"/>
        <end position="276"/>
    </location>
</feature>
<feature type="transmembrane region" description="Beta stranded" evidence="1">
    <location>
        <begin position="286"/>
        <end position="295"/>
    </location>
</feature>
<feature type="binding site" evidence="4">
    <location>
        <position position="25"/>
    </location>
    <ligand>
        <name>ATP</name>
        <dbReference type="ChEBI" id="CHEBI:30616"/>
    </ligand>
</feature>
<feature type="binding site" evidence="4">
    <location>
        <position position="33"/>
    </location>
    <ligand>
        <name>ATP</name>
        <dbReference type="ChEBI" id="CHEBI:30616"/>
    </ligand>
</feature>
<feature type="binding site" evidence="1">
    <location>
        <begin position="255"/>
        <end position="257"/>
    </location>
    <ligand>
        <name>NAD(+)</name>
        <dbReference type="ChEBI" id="CHEBI:57540"/>
    </ligand>
</feature>
<feature type="binding site" evidence="1">
    <location>
        <begin position="273"/>
        <end position="277"/>
    </location>
    <ligand>
        <name>NAD(+)</name>
        <dbReference type="ChEBI" id="CHEBI:57540"/>
    </ligand>
</feature>
<feature type="site" description="Involved in ceramide and phosphatidylcholine binding. Critical for channel structural stability and gating" evidence="1">
    <location>
        <position position="86"/>
    </location>
</feature>
<feature type="modified residue" description="Phosphoserine" evidence="6">
    <location>
        <position position="26"/>
    </location>
</feature>
<feature type="modified residue" description="N6-acetyllysine; alternate" evidence="1">
    <location>
        <position position="33"/>
    </location>
</feature>
<feature type="modified residue" description="N6-succinyllysine; alternate" evidence="4">
    <location>
        <position position="33"/>
    </location>
</feature>
<feature type="modified residue" description="Phosphotyrosine" evidence="4">
    <location>
        <position position="80"/>
    </location>
</feature>
<feature type="modified residue" description="Phosphothreonine" evidence="1">
    <location>
        <position position="120"/>
    </location>
</feature>
<feature type="modified residue" description="N6-acetyllysine; alternate" evidence="4">
    <location>
        <position position="122"/>
    </location>
</feature>
<feature type="modified residue" description="Phosphoserine" evidence="1">
    <location>
        <position position="206"/>
    </location>
</feature>
<feature type="modified residue" description="Phosphoserine" evidence="1">
    <location>
        <position position="253"/>
    </location>
</feature>
<feature type="modified residue" description="N6-acetyllysine; alternate" evidence="1">
    <location>
        <position position="279"/>
    </location>
</feature>
<feature type="cross-link" description="Glycyl lysine isopeptide (Lys-Gly) (interchain with G-Cter in ubiquitin)" evidence="1">
    <location>
        <position position="25"/>
    </location>
</feature>
<feature type="cross-link" description="Glycyl lysine isopeptide (Lys-Gly) (interchain with G-Cter in ubiquitin); alternate" evidence="1">
    <location>
        <position position="33"/>
    </location>
</feature>
<feature type="cross-link" description="Glycyl lysine isopeptide (Lys-Gly) (interchain with G-Cter in ubiquitin)" evidence="1">
    <location>
        <position position="66"/>
    </location>
</feature>
<feature type="cross-link" description="Glycyl lysine isopeptide (Lys-Gly) (interchain with G-Cter in ubiquitin)" evidence="1">
    <location>
        <position position="74"/>
    </location>
</feature>
<feature type="cross-link" description="Glycyl lysine isopeptide (Lys-Gly) (interchain with G-Cter in ubiquitin); alternate" evidence="1">
    <location>
        <position position="122"/>
    </location>
</feature>
<feature type="cross-link" description="Glycyl lysine isopeptide (Lys-Gly) (interchain with G-Cter in ubiquitin)" evidence="1">
    <location>
        <position position="123"/>
    </location>
</feature>
<feature type="cross-link" description="Glycyl lysine isopeptide (Lys-Gly) (interchain with G-Cter in ubiquitin)" evidence="1">
    <location>
        <position position="174"/>
    </location>
</feature>
<feature type="cross-link" description="Glycyl lysine isopeptide (Lys-Gly) (interchain with G-Cter in ubiquitin); alternate" evidence="1">
    <location>
        <position position="279"/>
    </location>
</feature>
<feature type="cross-link" description="Glycyl lysine isopeptide (Lys-Gly) (interchain with G-Cter in ubiquitin)" evidence="1">
    <location>
        <position position="287"/>
    </location>
</feature>
<sequence length="296" mass="31524">MAVSLACQAPRTPMAIPPSYADLGKSARDIFNKGYGFGLVKLDVKTKSASGVEFTTSGSSNTDTGKVNGSLETKYKWAEYGLTFTEKWNTDNTLGTEIAIEDQIAKGLKLTFDTTFSPNTGKKSGKIKSAYKRECLNLGCDVDFDFAGPAIHGSAVFGYEGWLAGYQMTFDSAKSKLTRNNFSVGYKTGDFQLHTNVNDGSEFGGSIYQKVSDNLETAVNLAWTAGSNSTRFGIAAKYKLDSTASISAKVNNSSLVGVGYTQTLRPGVKLTLSALIDGKSINAGGHKLGLGLELEA</sequence>
<accession>P82013</accession>
<accession>G3X8N2</accession>
<comment type="function">
    <text evidence="2 3">Non-selective voltage-gated ion channel that mediates the transport of anions and cations through the mitochondrion outer membrane and plasma membrane (By similarity). The channel adopts an open conformation at zero mV and a closed conformation at both positive and negative potentials (By similarity). There are two populations of channels; the main that functions in a lower open-state conductance with lower ion selectivity, that switch, in a voltage-dependent manner, from the open to a low-conducting 'closed' state and the other that has a normal ion selectivity in the typical high conductance, 'open' state (By similarity). Binds various lipids, including the sphingolipid ceramide, the phospholipid phosphatidylcholine, and the sterols cholesterol and oxysterol (By similarity). Binding of ceramide promotes the mitochondrial outer membrane permeabilization (MOMP) apoptotic pathway (By similarity).</text>
</comment>
<comment type="function">
    <text evidence="2">Catalyzes the scrambling of phospholipids across the outer mitochondrial membrane; the mechanism is unrelated to channel activity and is capable of translocating both anionic and zwitterionic phospholipids.</text>
</comment>
<comment type="catalytic activity">
    <reaction evidence="3">
        <text>chloride(in) = chloride(out)</text>
        <dbReference type="Rhea" id="RHEA:29823"/>
        <dbReference type="ChEBI" id="CHEBI:17996"/>
    </reaction>
</comment>
<comment type="catalytic activity">
    <reaction evidence="3">
        <text>K(+)(in) = K(+)(out)</text>
        <dbReference type="Rhea" id="RHEA:29463"/>
        <dbReference type="ChEBI" id="CHEBI:29103"/>
    </reaction>
</comment>
<comment type="catalytic activity">
    <reaction evidence="2">
        <text>a 1,2-diacyl-sn-glycero-3-phospho-L-serine(in) = a 1,2-diacyl-sn-glycero-3-phospho-L-serine(out)</text>
        <dbReference type="Rhea" id="RHEA:38663"/>
        <dbReference type="ChEBI" id="CHEBI:57262"/>
    </reaction>
</comment>
<comment type="catalytic activity">
    <reaction evidence="2">
        <text>a 1,2-diacyl-sn-glycero-3-phosphocholine(in) = a 1,2-diacyl-sn-glycero-3-phosphocholine(out)</text>
        <dbReference type="Rhea" id="RHEA:38571"/>
        <dbReference type="ChEBI" id="CHEBI:57643"/>
    </reaction>
</comment>
<comment type="catalytic activity">
    <reaction evidence="2">
        <text>a 1,2-diacyl-sn-glycero-3-phospho-(1D-myo-inositol)(in) = a 1,2-diacyl-sn-glycero-3-phospho-(1D-myo-inositol)(out)</text>
        <dbReference type="Rhea" id="RHEA:38691"/>
        <dbReference type="ChEBI" id="CHEBI:57880"/>
    </reaction>
</comment>
<comment type="subunit">
    <text evidence="2">Monomer, homodimer and higher order oligomers; formation of higher order structures is necessary for scramblase activity (By similarity).</text>
</comment>
<comment type="subcellular location">
    <subcellularLocation>
        <location evidence="2">Mitochondrion outer membrane</location>
    </subcellularLocation>
    <subcellularLocation>
        <location evidence="2">Membrane</location>
    </subcellularLocation>
    <text evidence="2">May localize to non-mitochondrial membranes.</text>
</comment>
<comment type="domain">
    <text evidence="1">Consists mainly of a membrane-spanning beta-barrel formed by 19 beta-strands.</text>
</comment>
<comment type="PTM">
    <text evidence="2">Ubiquitinated by PRKN during mitophagy, leading to its degradation and enhancement of mitophagy. Deubiquitinated by USP30.</text>
</comment>
<comment type="similarity">
    <text evidence="8">Belongs to the eukaryotic mitochondrial porin family.</text>
</comment>